<gene>
    <name evidence="1" type="primary">rplU</name>
    <name type="ordered locus">ECA0690</name>
</gene>
<keyword id="KW-1185">Reference proteome</keyword>
<keyword id="KW-0687">Ribonucleoprotein</keyword>
<keyword id="KW-0689">Ribosomal protein</keyword>
<keyword id="KW-0694">RNA-binding</keyword>
<keyword id="KW-0699">rRNA-binding</keyword>
<evidence type="ECO:0000255" key="1">
    <source>
        <dbReference type="HAMAP-Rule" id="MF_01363"/>
    </source>
</evidence>
<evidence type="ECO:0000305" key="2"/>
<name>RL21_PECAS</name>
<accession>Q6D9C6</accession>
<comment type="function">
    <text evidence="1">This protein binds to 23S rRNA in the presence of protein L20.</text>
</comment>
<comment type="subunit">
    <text evidence="1">Part of the 50S ribosomal subunit. Contacts protein L20.</text>
</comment>
<comment type="similarity">
    <text evidence="1">Belongs to the bacterial ribosomal protein bL21 family.</text>
</comment>
<protein>
    <recommendedName>
        <fullName evidence="1">Large ribosomal subunit protein bL21</fullName>
    </recommendedName>
    <alternativeName>
        <fullName evidence="2">50S ribosomal protein L21</fullName>
    </alternativeName>
</protein>
<proteinExistence type="inferred from homology"/>
<feature type="chain" id="PRO_0000269316" description="Large ribosomal subunit protein bL21">
    <location>
        <begin position="1"/>
        <end position="103"/>
    </location>
</feature>
<sequence>MYAVFQSGGKQHRVSEGQTVRLEKLDIATGEAVEFDLVLMVANGEEIKIGVPYVDGGKIKAEVVAHGRGEKVKIVKFRRRKHYRKQAGHRQWFTDVKITGISA</sequence>
<reference key="1">
    <citation type="journal article" date="2004" name="Proc. Natl. Acad. Sci. U.S.A.">
        <title>Genome sequence of the enterobacterial phytopathogen Erwinia carotovora subsp. atroseptica and characterization of virulence factors.</title>
        <authorList>
            <person name="Bell K.S."/>
            <person name="Sebaihia M."/>
            <person name="Pritchard L."/>
            <person name="Holden M.T.G."/>
            <person name="Hyman L.J."/>
            <person name="Holeva M.C."/>
            <person name="Thomson N.R."/>
            <person name="Bentley S.D."/>
            <person name="Churcher L.J.C."/>
            <person name="Mungall K."/>
            <person name="Atkin R."/>
            <person name="Bason N."/>
            <person name="Brooks K."/>
            <person name="Chillingworth T."/>
            <person name="Clark K."/>
            <person name="Doggett J."/>
            <person name="Fraser A."/>
            <person name="Hance Z."/>
            <person name="Hauser H."/>
            <person name="Jagels K."/>
            <person name="Moule S."/>
            <person name="Norbertczak H."/>
            <person name="Ormond D."/>
            <person name="Price C."/>
            <person name="Quail M.A."/>
            <person name="Sanders M."/>
            <person name="Walker D."/>
            <person name="Whitehead S."/>
            <person name="Salmond G.P.C."/>
            <person name="Birch P.R.J."/>
            <person name="Parkhill J."/>
            <person name="Toth I.K."/>
        </authorList>
    </citation>
    <scope>NUCLEOTIDE SEQUENCE [LARGE SCALE GENOMIC DNA]</scope>
    <source>
        <strain>SCRI 1043 / ATCC BAA-672</strain>
    </source>
</reference>
<dbReference type="EMBL" id="BX950851">
    <property type="protein sequence ID" value="CAG73604.1"/>
    <property type="molecule type" value="Genomic_DNA"/>
</dbReference>
<dbReference type="RefSeq" id="WP_011092304.1">
    <property type="nucleotide sequence ID" value="NC_004547.2"/>
</dbReference>
<dbReference type="SMR" id="Q6D9C6"/>
<dbReference type="STRING" id="218491.ECA0690"/>
<dbReference type="GeneID" id="57207424"/>
<dbReference type="KEGG" id="eca:ECA0690"/>
<dbReference type="PATRIC" id="fig|218491.5.peg.686"/>
<dbReference type="eggNOG" id="COG0261">
    <property type="taxonomic scope" value="Bacteria"/>
</dbReference>
<dbReference type="HOGENOM" id="CLU_061463_3_3_6"/>
<dbReference type="OrthoDB" id="9813334at2"/>
<dbReference type="Proteomes" id="UP000007966">
    <property type="component" value="Chromosome"/>
</dbReference>
<dbReference type="GO" id="GO:0005737">
    <property type="term" value="C:cytoplasm"/>
    <property type="evidence" value="ECO:0007669"/>
    <property type="project" value="UniProtKB-ARBA"/>
</dbReference>
<dbReference type="GO" id="GO:1990904">
    <property type="term" value="C:ribonucleoprotein complex"/>
    <property type="evidence" value="ECO:0007669"/>
    <property type="project" value="UniProtKB-KW"/>
</dbReference>
<dbReference type="GO" id="GO:0005840">
    <property type="term" value="C:ribosome"/>
    <property type="evidence" value="ECO:0007669"/>
    <property type="project" value="UniProtKB-KW"/>
</dbReference>
<dbReference type="GO" id="GO:0019843">
    <property type="term" value="F:rRNA binding"/>
    <property type="evidence" value="ECO:0007669"/>
    <property type="project" value="UniProtKB-UniRule"/>
</dbReference>
<dbReference type="GO" id="GO:0003735">
    <property type="term" value="F:structural constituent of ribosome"/>
    <property type="evidence" value="ECO:0007669"/>
    <property type="project" value="InterPro"/>
</dbReference>
<dbReference type="GO" id="GO:0006412">
    <property type="term" value="P:translation"/>
    <property type="evidence" value="ECO:0007669"/>
    <property type="project" value="UniProtKB-UniRule"/>
</dbReference>
<dbReference type="HAMAP" id="MF_01363">
    <property type="entry name" value="Ribosomal_bL21"/>
    <property type="match status" value="1"/>
</dbReference>
<dbReference type="InterPro" id="IPR028909">
    <property type="entry name" value="bL21-like"/>
</dbReference>
<dbReference type="InterPro" id="IPR036164">
    <property type="entry name" value="bL21-like_sf"/>
</dbReference>
<dbReference type="InterPro" id="IPR001787">
    <property type="entry name" value="Ribosomal_bL21"/>
</dbReference>
<dbReference type="InterPro" id="IPR018258">
    <property type="entry name" value="Ribosomal_bL21_CS"/>
</dbReference>
<dbReference type="NCBIfam" id="TIGR00061">
    <property type="entry name" value="L21"/>
    <property type="match status" value="1"/>
</dbReference>
<dbReference type="PANTHER" id="PTHR21349">
    <property type="entry name" value="50S RIBOSOMAL PROTEIN L21"/>
    <property type="match status" value="1"/>
</dbReference>
<dbReference type="PANTHER" id="PTHR21349:SF0">
    <property type="entry name" value="LARGE RIBOSOMAL SUBUNIT PROTEIN BL21M"/>
    <property type="match status" value="1"/>
</dbReference>
<dbReference type="Pfam" id="PF00829">
    <property type="entry name" value="Ribosomal_L21p"/>
    <property type="match status" value="1"/>
</dbReference>
<dbReference type="SUPFAM" id="SSF141091">
    <property type="entry name" value="L21p-like"/>
    <property type="match status" value="1"/>
</dbReference>
<dbReference type="PROSITE" id="PS01169">
    <property type="entry name" value="RIBOSOMAL_L21"/>
    <property type="match status" value="1"/>
</dbReference>
<organism>
    <name type="scientific">Pectobacterium atrosepticum (strain SCRI 1043 / ATCC BAA-672)</name>
    <name type="common">Erwinia carotovora subsp. atroseptica</name>
    <dbReference type="NCBI Taxonomy" id="218491"/>
    <lineage>
        <taxon>Bacteria</taxon>
        <taxon>Pseudomonadati</taxon>
        <taxon>Pseudomonadota</taxon>
        <taxon>Gammaproteobacteria</taxon>
        <taxon>Enterobacterales</taxon>
        <taxon>Pectobacteriaceae</taxon>
        <taxon>Pectobacterium</taxon>
    </lineage>
</organism>